<gene>
    <name evidence="1" type="primary">kptA</name>
    <name type="ordered locus">PF0083</name>
</gene>
<proteinExistence type="inferred from homology"/>
<dbReference type="EC" id="2.7.1.-" evidence="1"/>
<dbReference type="EMBL" id="AE009950">
    <property type="protein sequence ID" value="AAL80207.1"/>
    <property type="status" value="ALT_INIT"/>
    <property type="molecule type" value="Genomic_DNA"/>
</dbReference>
<dbReference type="RefSeq" id="WP_011011195.1">
    <property type="nucleotide sequence ID" value="NZ_CP023154.1"/>
</dbReference>
<dbReference type="SMR" id="Q8U4K2"/>
<dbReference type="STRING" id="186497.PF0083"/>
<dbReference type="PaxDb" id="186497-PF0083"/>
<dbReference type="KEGG" id="pfu:PF0083"/>
<dbReference type="PATRIC" id="fig|186497.12.peg.87"/>
<dbReference type="eggNOG" id="arCOG04063">
    <property type="taxonomic scope" value="Archaea"/>
</dbReference>
<dbReference type="HOGENOM" id="CLU_052998_4_1_2"/>
<dbReference type="OrthoDB" id="24376at2157"/>
<dbReference type="PhylomeDB" id="Q8U4K2"/>
<dbReference type="Proteomes" id="UP000001013">
    <property type="component" value="Chromosome"/>
</dbReference>
<dbReference type="GO" id="GO:0003950">
    <property type="term" value="F:NAD+ poly-ADP-ribosyltransferase activity"/>
    <property type="evidence" value="ECO:0007669"/>
    <property type="project" value="InterPro"/>
</dbReference>
<dbReference type="GO" id="GO:0000215">
    <property type="term" value="F:tRNA 2'-phosphotransferase activity"/>
    <property type="evidence" value="ECO:0007669"/>
    <property type="project" value="TreeGrafter"/>
</dbReference>
<dbReference type="GO" id="GO:0006388">
    <property type="term" value="P:tRNA splicing, via endonucleolytic cleavage and ligation"/>
    <property type="evidence" value="ECO:0007669"/>
    <property type="project" value="UniProtKB-UniRule"/>
</dbReference>
<dbReference type="Gene3D" id="3.20.170.30">
    <property type="match status" value="1"/>
</dbReference>
<dbReference type="Gene3D" id="1.10.10.970">
    <property type="entry name" value="RNA 2'-phosphotransferase, Tpt1/KptA family, N-terminal domain"/>
    <property type="match status" value="1"/>
</dbReference>
<dbReference type="HAMAP" id="MF_00299">
    <property type="entry name" value="KptA"/>
    <property type="match status" value="1"/>
</dbReference>
<dbReference type="InterPro" id="IPR002745">
    <property type="entry name" value="Ptrans_KptA/Tpt1"/>
</dbReference>
<dbReference type="InterPro" id="IPR042081">
    <property type="entry name" value="RNA_2'-PTrans_C"/>
</dbReference>
<dbReference type="InterPro" id="IPR022928">
    <property type="entry name" value="RNA_2'-PTrans_KptA"/>
</dbReference>
<dbReference type="InterPro" id="IPR042080">
    <property type="entry name" value="RNA_2'-PTrans_N"/>
</dbReference>
<dbReference type="NCBIfam" id="NF002013">
    <property type="entry name" value="PRK00819.1-2"/>
    <property type="match status" value="1"/>
</dbReference>
<dbReference type="PANTHER" id="PTHR12684">
    <property type="entry name" value="PUTATIVE PHOSPHOTRANSFERASE"/>
    <property type="match status" value="1"/>
</dbReference>
<dbReference type="PANTHER" id="PTHR12684:SF2">
    <property type="entry name" value="TRNA 2'-PHOSPHOTRANSFERASE 1"/>
    <property type="match status" value="1"/>
</dbReference>
<dbReference type="Pfam" id="PF01885">
    <property type="entry name" value="PTS_2-RNA"/>
    <property type="match status" value="1"/>
</dbReference>
<dbReference type="SUPFAM" id="SSF56399">
    <property type="entry name" value="ADP-ribosylation"/>
    <property type="match status" value="1"/>
</dbReference>
<sequence length="183" mass="21361">MVGGDRRFKVSKLMAYILRHSPWEFGLEPDEEGFVELADLIRAIKTVYPWVTEEFIKEIVEKDSKGRYEIRGSKIRARYGHSYPVVLKHEEDTESKVLYHGTIRENLKGILKEGIKPMKRQYVHLSLSYEDAYYTGRRHGKDVVVLLIDAECLRRKGYKILKAGKRVRIVKHVPVECISEILD</sequence>
<accession>Q8U4K2</accession>
<comment type="function">
    <text evidence="1">Removes the 2'-phosphate from RNA via an intermediate in which the phosphate is ADP-ribosylated by NAD followed by a presumed transesterification to release the RNA and generate ADP-ribose 1''-2''-cyclic phosphate (APPR&gt;P). May function as an ADP-ribosylase.</text>
</comment>
<comment type="similarity">
    <text evidence="1">Belongs to the KptA/TPT1 family.</text>
</comment>
<comment type="sequence caution" evidence="2">
    <conflict type="erroneous initiation">
        <sequence resource="EMBL-CDS" id="AAL80207"/>
    </conflict>
</comment>
<keyword id="KW-0520">NAD</keyword>
<keyword id="KW-1185">Reference proteome</keyword>
<keyword id="KW-0808">Transferase</keyword>
<organism>
    <name type="scientific">Pyrococcus furiosus (strain ATCC 43587 / DSM 3638 / JCM 8422 / Vc1)</name>
    <dbReference type="NCBI Taxonomy" id="186497"/>
    <lineage>
        <taxon>Archaea</taxon>
        <taxon>Methanobacteriati</taxon>
        <taxon>Methanobacteriota</taxon>
        <taxon>Thermococci</taxon>
        <taxon>Thermococcales</taxon>
        <taxon>Thermococcaceae</taxon>
        <taxon>Pyrococcus</taxon>
    </lineage>
</organism>
<evidence type="ECO:0000255" key="1">
    <source>
        <dbReference type="HAMAP-Rule" id="MF_00299"/>
    </source>
</evidence>
<evidence type="ECO:0000305" key="2"/>
<name>KPTA_PYRFU</name>
<protein>
    <recommendedName>
        <fullName evidence="1">Probable RNA 2'-phosphotransferase</fullName>
        <ecNumber evidence="1">2.7.1.-</ecNumber>
    </recommendedName>
</protein>
<reference key="1">
    <citation type="journal article" date="1999" name="Genetics">
        <title>Divergence of the hyperthermophilic archaea Pyrococcus furiosus and P. horikoshii inferred from complete genomic sequences.</title>
        <authorList>
            <person name="Maeder D.L."/>
            <person name="Weiss R.B."/>
            <person name="Dunn D.M."/>
            <person name="Cherry J.L."/>
            <person name="Gonzalez J.M."/>
            <person name="DiRuggiero J."/>
            <person name="Robb F.T."/>
        </authorList>
    </citation>
    <scope>NUCLEOTIDE SEQUENCE [LARGE SCALE GENOMIC DNA]</scope>
    <source>
        <strain>ATCC 43587 / DSM 3638 / JCM 8422 / Vc1</strain>
    </source>
</reference>
<feature type="chain" id="PRO_0000157492" description="Probable RNA 2'-phosphotransferase">
    <location>
        <begin position="1"/>
        <end position="183"/>
    </location>
</feature>